<comment type="function">
    <text evidence="1">Catalyzes the final step of fatty acid oxidation in which acetyl-CoA is released and the CoA ester of a fatty acid two carbons shorter is formed.</text>
</comment>
<comment type="catalytic activity">
    <reaction evidence="1">
        <text>an acyl-CoA + acetyl-CoA = a 3-oxoacyl-CoA + CoA</text>
        <dbReference type="Rhea" id="RHEA:21564"/>
        <dbReference type="ChEBI" id="CHEBI:57287"/>
        <dbReference type="ChEBI" id="CHEBI:57288"/>
        <dbReference type="ChEBI" id="CHEBI:58342"/>
        <dbReference type="ChEBI" id="CHEBI:90726"/>
        <dbReference type="EC" id="2.3.1.16"/>
    </reaction>
</comment>
<comment type="pathway">
    <text evidence="1">Lipid metabolism; fatty acid beta-oxidation.</text>
</comment>
<comment type="subunit">
    <text evidence="1">Heterotetramer of two alpha chains (FadB) and two beta chains (FadA).</text>
</comment>
<comment type="subcellular location">
    <subcellularLocation>
        <location evidence="1">Cytoplasm</location>
    </subcellularLocation>
</comment>
<comment type="similarity">
    <text evidence="1">Belongs to the thiolase-like superfamily. Thiolase family.</text>
</comment>
<gene>
    <name evidence="1" type="primary">fadA</name>
    <name type="ordered locus">PFL_1941</name>
</gene>
<dbReference type="EC" id="2.3.1.16" evidence="1"/>
<dbReference type="EMBL" id="CP000076">
    <property type="protein sequence ID" value="AAY91228.1"/>
    <property type="molecule type" value="Genomic_DNA"/>
</dbReference>
<dbReference type="RefSeq" id="WP_011060261.1">
    <property type="nucleotide sequence ID" value="NC_004129.6"/>
</dbReference>
<dbReference type="SMR" id="Q4KFC3"/>
<dbReference type="STRING" id="220664.PFL_1941"/>
<dbReference type="GeneID" id="57474985"/>
<dbReference type="KEGG" id="pfl:PFL_1941"/>
<dbReference type="PATRIC" id="fig|220664.5.peg.1980"/>
<dbReference type="eggNOG" id="COG0183">
    <property type="taxonomic scope" value="Bacteria"/>
</dbReference>
<dbReference type="HOGENOM" id="CLU_031026_2_3_6"/>
<dbReference type="UniPathway" id="UPA00659"/>
<dbReference type="Proteomes" id="UP000008540">
    <property type="component" value="Chromosome"/>
</dbReference>
<dbReference type="GO" id="GO:0005737">
    <property type="term" value="C:cytoplasm"/>
    <property type="evidence" value="ECO:0007669"/>
    <property type="project" value="UniProtKB-SubCell"/>
</dbReference>
<dbReference type="GO" id="GO:0003988">
    <property type="term" value="F:acetyl-CoA C-acyltransferase activity"/>
    <property type="evidence" value="ECO:0007669"/>
    <property type="project" value="UniProtKB-UniRule"/>
</dbReference>
<dbReference type="GO" id="GO:0006635">
    <property type="term" value="P:fatty acid beta-oxidation"/>
    <property type="evidence" value="ECO:0007669"/>
    <property type="project" value="UniProtKB-UniRule"/>
</dbReference>
<dbReference type="GO" id="GO:0010124">
    <property type="term" value="P:phenylacetate catabolic process"/>
    <property type="evidence" value="ECO:0007669"/>
    <property type="project" value="TreeGrafter"/>
</dbReference>
<dbReference type="CDD" id="cd00751">
    <property type="entry name" value="thiolase"/>
    <property type="match status" value="1"/>
</dbReference>
<dbReference type="FunFam" id="3.40.47.10:FF:000010">
    <property type="entry name" value="Acetyl-CoA acetyltransferase (Thiolase)"/>
    <property type="match status" value="1"/>
</dbReference>
<dbReference type="Gene3D" id="3.40.47.10">
    <property type="match status" value="2"/>
</dbReference>
<dbReference type="HAMAP" id="MF_01620">
    <property type="entry name" value="FadA"/>
    <property type="match status" value="1"/>
</dbReference>
<dbReference type="InterPro" id="IPR012805">
    <property type="entry name" value="FadA"/>
</dbReference>
<dbReference type="InterPro" id="IPR002155">
    <property type="entry name" value="Thiolase"/>
</dbReference>
<dbReference type="InterPro" id="IPR016039">
    <property type="entry name" value="Thiolase-like"/>
</dbReference>
<dbReference type="InterPro" id="IPR050215">
    <property type="entry name" value="Thiolase-like_sf_Thiolase"/>
</dbReference>
<dbReference type="InterPro" id="IPR020615">
    <property type="entry name" value="Thiolase_acyl_enz_int_AS"/>
</dbReference>
<dbReference type="InterPro" id="IPR020610">
    <property type="entry name" value="Thiolase_AS"/>
</dbReference>
<dbReference type="InterPro" id="IPR020617">
    <property type="entry name" value="Thiolase_C"/>
</dbReference>
<dbReference type="InterPro" id="IPR020613">
    <property type="entry name" value="Thiolase_CS"/>
</dbReference>
<dbReference type="InterPro" id="IPR020616">
    <property type="entry name" value="Thiolase_N"/>
</dbReference>
<dbReference type="NCBIfam" id="TIGR01930">
    <property type="entry name" value="AcCoA-C-Actrans"/>
    <property type="match status" value="1"/>
</dbReference>
<dbReference type="NCBIfam" id="TIGR02445">
    <property type="entry name" value="fadA"/>
    <property type="match status" value="1"/>
</dbReference>
<dbReference type="NCBIfam" id="NF006510">
    <property type="entry name" value="PRK08947.1"/>
    <property type="match status" value="1"/>
</dbReference>
<dbReference type="PANTHER" id="PTHR43853:SF11">
    <property type="entry name" value="3-KETOACYL-COA THIOLASE FADA"/>
    <property type="match status" value="1"/>
</dbReference>
<dbReference type="PANTHER" id="PTHR43853">
    <property type="entry name" value="3-KETOACYL-COA THIOLASE, PEROXISOMAL"/>
    <property type="match status" value="1"/>
</dbReference>
<dbReference type="Pfam" id="PF02803">
    <property type="entry name" value="Thiolase_C"/>
    <property type="match status" value="1"/>
</dbReference>
<dbReference type="Pfam" id="PF00108">
    <property type="entry name" value="Thiolase_N"/>
    <property type="match status" value="1"/>
</dbReference>
<dbReference type="PIRSF" id="PIRSF000429">
    <property type="entry name" value="Ac-CoA_Ac_transf"/>
    <property type="match status" value="1"/>
</dbReference>
<dbReference type="SUPFAM" id="SSF53901">
    <property type="entry name" value="Thiolase-like"/>
    <property type="match status" value="2"/>
</dbReference>
<dbReference type="PROSITE" id="PS00098">
    <property type="entry name" value="THIOLASE_1"/>
    <property type="match status" value="1"/>
</dbReference>
<dbReference type="PROSITE" id="PS00737">
    <property type="entry name" value="THIOLASE_2"/>
    <property type="match status" value="1"/>
</dbReference>
<dbReference type="PROSITE" id="PS00099">
    <property type="entry name" value="THIOLASE_3"/>
    <property type="match status" value="1"/>
</dbReference>
<accession>Q4KFC3</accession>
<name>FADA_PSEF5</name>
<proteinExistence type="inferred from homology"/>
<sequence length="391" mass="41639">MSLNPRDVVIVDFGRTPMGRSKGGMHRNTRAEDMSAHLISKLLERNAKVDPAEVEDVIWGCVNQTLEQGWNIARMASLMTQIPHTSAGQTVSRLCGSSMSALHTAAQAIMTGNGDVFVVGGVEHMGHVSMMHGVDPNPHMSLYAAKASGMMGLTAEMLGKMHGITREQQDAFGVRSHQLAHKATVEGKFKDEIIPMQGYDENGFLKLFDYDETIRPETTLESLAALKPAFNPKGGTVTAGTSSQITDGASCMIVMSAQRAQDLGIQPMAVIRSMAVAGVDPAIMGYGPVPATQKALKRAGLGINDIDFFELNEAFAAQALPVLKDLKVLDKMNEKVNLHGGAIALGHPFGCSGARISGTLLNVMKQNGGTFGVSTMCIGLGQGISTVFERV</sequence>
<feature type="chain" id="PRO_0000206379" description="3-ketoacyl-CoA thiolase">
    <location>
        <begin position="1"/>
        <end position="391"/>
    </location>
</feature>
<feature type="active site" description="Acyl-thioester intermediate" evidence="1">
    <location>
        <position position="95"/>
    </location>
</feature>
<feature type="active site" description="Proton acceptor" evidence="1">
    <location>
        <position position="347"/>
    </location>
</feature>
<feature type="active site" description="Proton acceptor" evidence="1">
    <location>
        <position position="377"/>
    </location>
</feature>
<organism>
    <name type="scientific">Pseudomonas fluorescens (strain ATCC BAA-477 / NRRL B-23932 / Pf-5)</name>
    <dbReference type="NCBI Taxonomy" id="220664"/>
    <lineage>
        <taxon>Bacteria</taxon>
        <taxon>Pseudomonadati</taxon>
        <taxon>Pseudomonadota</taxon>
        <taxon>Gammaproteobacteria</taxon>
        <taxon>Pseudomonadales</taxon>
        <taxon>Pseudomonadaceae</taxon>
        <taxon>Pseudomonas</taxon>
    </lineage>
</organism>
<evidence type="ECO:0000255" key="1">
    <source>
        <dbReference type="HAMAP-Rule" id="MF_01620"/>
    </source>
</evidence>
<protein>
    <recommendedName>
        <fullName evidence="1">3-ketoacyl-CoA thiolase</fullName>
        <ecNumber evidence="1">2.3.1.16</ecNumber>
    </recommendedName>
    <alternativeName>
        <fullName evidence="1">Acetyl-CoA acyltransferase</fullName>
    </alternativeName>
    <alternativeName>
        <fullName evidence="1">Beta-ketothiolase</fullName>
    </alternativeName>
    <alternativeName>
        <fullName evidence="1">Fatty acid oxidation complex subunit beta</fullName>
    </alternativeName>
</protein>
<keyword id="KW-0012">Acyltransferase</keyword>
<keyword id="KW-0963">Cytoplasm</keyword>
<keyword id="KW-0276">Fatty acid metabolism</keyword>
<keyword id="KW-0442">Lipid degradation</keyword>
<keyword id="KW-0443">Lipid metabolism</keyword>
<keyword id="KW-0808">Transferase</keyword>
<reference key="1">
    <citation type="journal article" date="2005" name="Nat. Biotechnol.">
        <title>Complete genome sequence of the plant commensal Pseudomonas fluorescens Pf-5.</title>
        <authorList>
            <person name="Paulsen I.T."/>
            <person name="Press C.M."/>
            <person name="Ravel J."/>
            <person name="Kobayashi D.Y."/>
            <person name="Myers G.S.A."/>
            <person name="Mavrodi D.V."/>
            <person name="DeBoy R.T."/>
            <person name="Seshadri R."/>
            <person name="Ren Q."/>
            <person name="Madupu R."/>
            <person name="Dodson R.J."/>
            <person name="Durkin A.S."/>
            <person name="Brinkac L.M."/>
            <person name="Daugherty S.C."/>
            <person name="Sullivan S.A."/>
            <person name="Rosovitz M.J."/>
            <person name="Gwinn M.L."/>
            <person name="Zhou L."/>
            <person name="Schneider D.J."/>
            <person name="Cartinhour S.W."/>
            <person name="Nelson W.C."/>
            <person name="Weidman J."/>
            <person name="Watkins K."/>
            <person name="Tran K."/>
            <person name="Khouri H."/>
            <person name="Pierson E.A."/>
            <person name="Pierson L.S. III"/>
            <person name="Thomashow L.S."/>
            <person name="Loper J.E."/>
        </authorList>
    </citation>
    <scope>NUCLEOTIDE SEQUENCE [LARGE SCALE GENOMIC DNA]</scope>
    <source>
        <strain>ATCC BAA-477 / NRRL B-23932 / Pf-5</strain>
    </source>
</reference>